<keyword id="KW-0119">Carbohydrate metabolism</keyword>
<keyword id="KW-0378">Hydrolase</keyword>
<dbReference type="EC" id="3.5.99.6" evidence="1"/>
<dbReference type="EMBL" id="BA000017">
    <property type="protein sequence ID" value="BAB56731.1"/>
    <property type="molecule type" value="Genomic_DNA"/>
</dbReference>
<dbReference type="RefSeq" id="WP_000866415.1">
    <property type="nucleotide sequence ID" value="NC_002758.2"/>
</dbReference>
<dbReference type="SMR" id="P65512"/>
<dbReference type="KEGG" id="sav:SAV0569"/>
<dbReference type="HOGENOM" id="CLU_049611_1_1_9"/>
<dbReference type="PhylomeDB" id="P65512"/>
<dbReference type="UniPathway" id="UPA00629">
    <property type="reaction ID" value="UER00684"/>
</dbReference>
<dbReference type="Proteomes" id="UP000002481">
    <property type="component" value="Chromosome"/>
</dbReference>
<dbReference type="GO" id="GO:0005737">
    <property type="term" value="C:cytoplasm"/>
    <property type="evidence" value="ECO:0007669"/>
    <property type="project" value="TreeGrafter"/>
</dbReference>
<dbReference type="GO" id="GO:0004342">
    <property type="term" value="F:glucosamine-6-phosphate deaminase activity"/>
    <property type="evidence" value="ECO:0007669"/>
    <property type="project" value="UniProtKB-UniRule"/>
</dbReference>
<dbReference type="GO" id="GO:0042802">
    <property type="term" value="F:identical protein binding"/>
    <property type="evidence" value="ECO:0007669"/>
    <property type="project" value="TreeGrafter"/>
</dbReference>
<dbReference type="GO" id="GO:0005975">
    <property type="term" value="P:carbohydrate metabolic process"/>
    <property type="evidence" value="ECO:0007669"/>
    <property type="project" value="InterPro"/>
</dbReference>
<dbReference type="GO" id="GO:0006043">
    <property type="term" value="P:glucosamine catabolic process"/>
    <property type="evidence" value="ECO:0007669"/>
    <property type="project" value="TreeGrafter"/>
</dbReference>
<dbReference type="GO" id="GO:0006046">
    <property type="term" value="P:N-acetylglucosamine catabolic process"/>
    <property type="evidence" value="ECO:0007669"/>
    <property type="project" value="TreeGrafter"/>
</dbReference>
<dbReference type="GO" id="GO:0019262">
    <property type="term" value="P:N-acetylneuraminate catabolic process"/>
    <property type="evidence" value="ECO:0007669"/>
    <property type="project" value="UniProtKB-UniRule"/>
</dbReference>
<dbReference type="CDD" id="cd01399">
    <property type="entry name" value="GlcN6P_deaminase"/>
    <property type="match status" value="1"/>
</dbReference>
<dbReference type="FunFam" id="3.40.50.1360:FF:000003">
    <property type="entry name" value="Glucosamine-6-phosphate deaminase"/>
    <property type="match status" value="1"/>
</dbReference>
<dbReference type="Gene3D" id="3.40.50.1360">
    <property type="match status" value="1"/>
</dbReference>
<dbReference type="HAMAP" id="MF_01241">
    <property type="entry name" value="GlcN6P_deamin"/>
    <property type="match status" value="1"/>
</dbReference>
<dbReference type="InterPro" id="IPR006148">
    <property type="entry name" value="Glc/Gal-6P_isomerase"/>
</dbReference>
<dbReference type="InterPro" id="IPR004547">
    <property type="entry name" value="Glucosamine6P_isomerase"/>
</dbReference>
<dbReference type="InterPro" id="IPR018321">
    <property type="entry name" value="Glucosamine6P_isomerase_CS"/>
</dbReference>
<dbReference type="InterPro" id="IPR037171">
    <property type="entry name" value="NagB/RpiA_transferase-like"/>
</dbReference>
<dbReference type="NCBIfam" id="TIGR00502">
    <property type="entry name" value="nagB"/>
    <property type="match status" value="1"/>
</dbReference>
<dbReference type="PANTHER" id="PTHR11280">
    <property type="entry name" value="GLUCOSAMINE-6-PHOSPHATE ISOMERASE"/>
    <property type="match status" value="1"/>
</dbReference>
<dbReference type="PANTHER" id="PTHR11280:SF5">
    <property type="entry name" value="GLUCOSAMINE-6-PHOSPHATE ISOMERASE"/>
    <property type="match status" value="1"/>
</dbReference>
<dbReference type="Pfam" id="PF01182">
    <property type="entry name" value="Glucosamine_iso"/>
    <property type="match status" value="1"/>
</dbReference>
<dbReference type="SUPFAM" id="SSF100950">
    <property type="entry name" value="NagB/RpiA/CoA transferase-like"/>
    <property type="match status" value="1"/>
</dbReference>
<dbReference type="PROSITE" id="PS01161">
    <property type="entry name" value="GLC_GALNAC_ISOMERASE"/>
    <property type="match status" value="1"/>
</dbReference>
<gene>
    <name evidence="1" type="primary">nagB</name>
    <name type="ordered locus">SAV0569</name>
</gene>
<proteinExistence type="inferred from homology"/>
<sequence>MKVLNLGSKKQASFYVACELYKEMAFNQHCKLGLATGGTMTDLYEQLVKLLNKNQLNVDNVSTFNLDEYVGLTASHPQSYHYYMDDMLFKQYPYFNRKNIHIPNGDADDMNAEASKYNDVLEQQGQRDIQILGIGENGHIGFNEPGTPFDSVTHIVDLTESTIKANSRYFKNEDDVPKQAISMGLANILQAKRIILLAFGEKKRAAITHLLNQEISVDVPATLLHKHPNVEIYLDDEACPKNVAKIHVDEMD</sequence>
<evidence type="ECO:0000255" key="1">
    <source>
        <dbReference type="HAMAP-Rule" id="MF_01241"/>
    </source>
</evidence>
<protein>
    <recommendedName>
        <fullName evidence="1">Glucosamine-6-phosphate deaminase</fullName>
        <ecNumber evidence="1">3.5.99.6</ecNumber>
    </recommendedName>
    <alternativeName>
        <fullName evidence="1">GlcN6P deaminase</fullName>
        <shortName evidence="1">GNPDA</shortName>
    </alternativeName>
    <alternativeName>
        <fullName evidence="1">Glucosamine-6-phosphate isomerase</fullName>
    </alternativeName>
</protein>
<reference key="1">
    <citation type="journal article" date="2001" name="Lancet">
        <title>Whole genome sequencing of meticillin-resistant Staphylococcus aureus.</title>
        <authorList>
            <person name="Kuroda M."/>
            <person name="Ohta T."/>
            <person name="Uchiyama I."/>
            <person name="Baba T."/>
            <person name="Yuzawa H."/>
            <person name="Kobayashi I."/>
            <person name="Cui L."/>
            <person name="Oguchi A."/>
            <person name="Aoki K."/>
            <person name="Nagai Y."/>
            <person name="Lian J.-Q."/>
            <person name="Ito T."/>
            <person name="Kanamori M."/>
            <person name="Matsumaru H."/>
            <person name="Maruyama A."/>
            <person name="Murakami H."/>
            <person name="Hosoyama A."/>
            <person name="Mizutani-Ui Y."/>
            <person name="Takahashi N.K."/>
            <person name="Sawano T."/>
            <person name="Inoue R."/>
            <person name="Kaito C."/>
            <person name="Sekimizu K."/>
            <person name="Hirakawa H."/>
            <person name="Kuhara S."/>
            <person name="Goto S."/>
            <person name="Yabuzaki J."/>
            <person name="Kanehisa M."/>
            <person name="Yamashita A."/>
            <person name="Oshima K."/>
            <person name="Furuya K."/>
            <person name="Yoshino C."/>
            <person name="Shiba T."/>
            <person name="Hattori M."/>
            <person name="Ogasawara N."/>
            <person name="Hayashi H."/>
            <person name="Hiramatsu K."/>
        </authorList>
    </citation>
    <scope>NUCLEOTIDE SEQUENCE [LARGE SCALE GENOMIC DNA]</scope>
    <source>
        <strain>Mu50 / ATCC 700699</strain>
    </source>
</reference>
<accession>P65512</accession>
<accession>Q99W40</accession>
<feature type="chain" id="PRO_0000160163" description="Glucosamine-6-phosphate deaminase">
    <location>
        <begin position="1"/>
        <end position="252"/>
    </location>
</feature>
<feature type="active site" description="Proton acceptor; for enolization step" evidence="1">
    <location>
        <position position="67"/>
    </location>
</feature>
<feature type="active site" description="For ring-opening step" evidence="1">
    <location>
        <position position="137"/>
    </location>
</feature>
<feature type="active site" description="Proton acceptor; for ring-opening step" evidence="1">
    <location>
        <position position="139"/>
    </location>
</feature>
<feature type="active site" description="For ring-opening step" evidence="1">
    <location>
        <position position="144"/>
    </location>
</feature>
<name>NAGB_STAAM</name>
<comment type="function">
    <text evidence="1">Catalyzes the reversible isomerization-deamination of glucosamine 6-phosphate (GlcN6P) to form fructose 6-phosphate (Fru6P) and ammonium ion.</text>
</comment>
<comment type="catalytic activity">
    <reaction evidence="1">
        <text>alpha-D-glucosamine 6-phosphate + H2O = beta-D-fructose 6-phosphate + NH4(+)</text>
        <dbReference type="Rhea" id="RHEA:12172"/>
        <dbReference type="ChEBI" id="CHEBI:15377"/>
        <dbReference type="ChEBI" id="CHEBI:28938"/>
        <dbReference type="ChEBI" id="CHEBI:57634"/>
        <dbReference type="ChEBI" id="CHEBI:75989"/>
        <dbReference type="EC" id="3.5.99.6"/>
    </reaction>
</comment>
<comment type="pathway">
    <text evidence="1">Amino-sugar metabolism; N-acetylneuraminate degradation; D-fructose 6-phosphate from N-acetylneuraminate: step 5/5.</text>
</comment>
<comment type="similarity">
    <text evidence="1">Belongs to the glucosamine/galactosamine-6-phosphate isomerase family. NagB subfamily.</text>
</comment>
<organism>
    <name type="scientific">Staphylococcus aureus (strain Mu50 / ATCC 700699)</name>
    <dbReference type="NCBI Taxonomy" id="158878"/>
    <lineage>
        <taxon>Bacteria</taxon>
        <taxon>Bacillati</taxon>
        <taxon>Bacillota</taxon>
        <taxon>Bacilli</taxon>
        <taxon>Bacillales</taxon>
        <taxon>Staphylococcaceae</taxon>
        <taxon>Staphylococcus</taxon>
    </lineage>
</organism>